<accession>Q2GVT8</accession>
<name>SEC31_CHAGB</name>
<reference key="1">
    <citation type="journal article" date="2015" name="Genome Announc.">
        <title>Draft genome sequence of the cellulolytic fungus Chaetomium globosum.</title>
        <authorList>
            <person name="Cuomo C.A."/>
            <person name="Untereiner W.A."/>
            <person name="Ma L.-J."/>
            <person name="Grabherr M."/>
            <person name="Birren B.W."/>
        </authorList>
    </citation>
    <scope>NUCLEOTIDE SEQUENCE [LARGE SCALE GENOMIC DNA]</scope>
    <source>
        <strain>ATCC 6205 / CBS 148.51 / DSM 1962 / NBRC 6347 / NRRL 1970</strain>
    </source>
</reference>
<sequence length="1258" mass="134167">MVRLREIPRTAAFAWSSGPNPLLVTGTRSGAVDADFSDETKLELWELNLDALDQGLELQPVASISTESRFYDIAWGAPSDEHPRGVVAGAMEDGSLQLWDAAKLLAGEEAVMSRDTKHTGPIKALQFNPLRPQVLATAGSKGELFVWDTNDTSTAFRLGTAAAHDIDCVAWNRKVSNILATGSAGGFVTVWDLKTKKASLTLNNNRKPVSAIAWDPTNSTNLLTATSDDNTPLILLWNLRNSQAPEKTLQGHDQGILSLSWCQQDPGLLISCGKDNRTLVWNPQTGERYGEFPEATNWTFLTRFNPGNPNLVATASFDGKITVQTLQNTNASVAPAAQTNTDDDDFFAKAPTELQGASFSLTRAPIWFERPVGVSFGYGGKLITFKKNDTPAGQPRSSKIQISSFSVDSDIGSATEKFEEAYKRGDIGAICDSNAADAQTEEEKADWQVLKALSESDGRTKILEYLGFAKDDEASTSPEETEVAEPKEEPKETGLAPPQPNGDDAKKKHKRVTSMWGDLDEGDDFLSDLTPAKGAKTDQPFQLLGEGNTTEDRVTKAIILGNFEKAVDICLKEDRVADAFILANCGGKELVDKVQTSYLAQKKGTPSYLRLINSVIGKNLWDVVYNADLGNWKETMVTLCTFAEPSEFPDLCEALGDRIYESGSRQDASFCYLVGSKLEKVVDIWVVELQEAEQAGLQEASNDSTFSIHARSLQHFIEKVTVFRHVIKFADDEKELTEGWKLGSLYDKYTQYADIVAAHGQLAVAQRYLDLLPTKFPAAEVARNRVRLATQKVAPQAPQVAQRQTGPISRAASRGPTPMGYQQPASIPPVGPSHTNPYAPPAPVQPAASSSNPYAPSTTSQFTPAGASPYAPAGYAPPHPAPGGYGPPQTFTQPGAPAPPPPRNTGPPPKIHKDPGSWNDVPMVTRPPVRKTTPSVAPITAPFGAQAGLQSPLPTGPYQRGAPTPPPPPPKGSAPPRSVTSPPVGPPPAGPYGARPASVTSNTPSPYAPPPAAAAAGLPSPMVPPPAGRTASPYNAPPAGPPPSNRYAPAPSAQPYGQGPTPTPLAPPPANPYAPAPAAQQPMAPPPQQYTAPPPQASRPPVGPPPMSGPPPAAGGPPPAARAAPPQQTPPPPRAAATPPAARHPAGDRSHIPPDAQRMVELLSQDMQRVASKAPATFAPQVKDTQKRLGLLFDHLNNGELVRPDTVEQLTAIAEAIAGKNYDAASKGQMEIFRDKVEECGQWMVGLKRLISMSKATP</sequence>
<protein>
    <recommendedName>
        <fullName>Protein transport protein SEC31</fullName>
    </recommendedName>
</protein>
<feature type="chain" id="PRO_0000295434" description="Protein transport protein SEC31">
    <location>
        <begin position="1"/>
        <end position="1258"/>
    </location>
</feature>
<feature type="repeat" description="WD 1">
    <location>
        <begin position="6"/>
        <end position="46"/>
    </location>
</feature>
<feature type="repeat" description="WD 2">
    <location>
        <begin position="65"/>
        <end position="109"/>
    </location>
</feature>
<feature type="repeat" description="WD 3">
    <location>
        <begin position="117"/>
        <end position="157"/>
    </location>
</feature>
<feature type="repeat" description="WD 4">
    <location>
        <begin position="161"/>
        <end position="201"/>
    </location>
</feature>
<feature type="repeat" description="WD 5">
    <location>
        <begin position="204"/>
        <end position="247"/>
    </location>
</feature>
<feature type="repeat" description="WD 6">
    <location>
        <begin position="251"/>
        <end position="291"/>
    </location>
</feature>
<feature type="repeat" description="WD 7">
    <location>
        <begin position="294"/>
        <end position="334"/>
    </location>
</feature>
<feature type="repeat" description="WD 8; interaction with SEC13" evidence="2">
    <location>
        <begin position="375"/>
        <end position="403"/>
    </location>
</feature>
<feature type="region of interest" description="Disordered" evidence="3">
    <location>
        <begin position="470"/>
        <end position="511"/>
    </location>
</feature>
<feature type="region of interest" description="Disordered" evidence="3">
    <location>
        <begin position="792"/>
        <end position="1153"/>
    </location>
</feature>
<feature type="compositionally biased region" description="Low complexity" evidence="3">
    <location>
        <begin position="792"/>
        <end position="805"/>
    </location>
</feature>
<feature type="compositionally biased region" description="Low complexity" evidence="3">
    <location>
        <begin position="845"/>
        <end position="874"/>
    </location>
</feature>
<feature type="compositionally biased region" description="Pro residues" evidence="3">
    <location>
        <begin position="896"/>
        <end position="909"/>
    </location>
</feature>
<feature type="compositionally biased region" description="Pro residues" evidence="3">
    <location>
        <begin position="963"/>
        <end position="973"/>
    </location>
</feature>
<feature type="compositionally biased region" description="Pro residues" evidence="3">
    <location>
        <begin position="1035"/>
        <end position="1044"/>
    </location>
</feature>
<feature type="compositionally biased region" description="Pro residues" evidence="3">
    <location>
        <begin position="1061"/>
        <end position="1075"/>
    </location>
</feature>
<feature type="compositionally biased region" description="Pro residues" evidence="3">
    <location>
        <begin position="1083"/>
        <end position="1120"/>
    </location>
</feature>
<feature type="compositionally biased region" description="Low complexity" evidence="3">
    <location>
        <begin position="1135"/>
        <end position="1144"/>
    </location>
</feature>
<dbReference type="EMBL" id="CH408033">
    <property type="protein sequence ID" value="EAQ86663.1"/>
    <property type="molecule type" value="Genomic_DNA"/>
</dbReference>
<dbReference type="RefSeq" id="XP_001225572.1">
    <property type="nucleotide sequence ID" value="XM_001225571.1"/>
</dbReference>
<dbReference type="SMR" id="Q2GVT8"/>
<dbReference type="FunCoup" id="Q2GVT8">
    <property type="interactions" value="681"/>
</dbReference>
<dbReference type="STRING" id="306901.Q2GVT8"/>
<dbReference type="GeneID" id="4394267"/>
<dbReference type="VEuPathDB" id="FungiDB:CHGG_07916"/>
<dbReference type="eggNOG" id="KOG0307">
    <property type="taxonomic scope" value="Eukaryota"/>
</dbReference>
<dbReference type="HOGENOM" id="CLU_003033_2_0_1"/>
<dbReference type="InParanoid" id="Q2GVT8"/>
<dbReference type="OMA" id="WLERPCG"/>
<dbReference type="OrthoDB" id="542917at2759"/>
<dbReference type="Proteomes" id="UP000001056">
    <property type="component" value="Unassembled WGS sequence"/>
</dbReference>
<dbReference type="GO" id="GO:0030127">
    <property type="term" value="C:COPII vesicle coat"/>
    <property type="evidence" value="ECO:0007669"/>
    <property type="project" value="TreeGrafter"/>
</dbReference>
<dbReference type="GO" id="GO:0070971">
    <property type="term" value="C:endoplasmic reticulum exit site"/>
    <property type="evidence" value="ECO:0007669"/>
    <property type="project" value="TreeGrafter"/>
</dbReference>
<dbReference type="GO" id="GO:0005789">
    <property type="term" value="C:endoplasmic reticulum membrane"/>
    <property type="evidence" value="ECO:0007669"/>
    <property type="project" value="UniProtKB-SubCell"/>
</dbReference>
<dbReference type="GO" id="GO:0005198">
    <property type="term" value="F:structural molecule activity"/>
    <property type="evidence" value="ECO:0007669"/>
    <property type="project" value="TreeGrafter"/>
</dbReference>
<dbReference type="GO" id="GO:0090110">
    <property type="term" value="P:COPII-coated vesicle cargo loading"/>
    <property type="evidence" value="ECO:0007669"/>
    <property type="project" value="TreeGrafter"/>
</dbReference>
<dbReference type="GO" id="GO:0007029">
    <property type="term" value="P:endoplasmic reticulum organization"/>
    <property type="evidence" value="ECO:0007669"/>
    <property type="project" value="TreeGrafter"/>
</dbReference>
<dbReference type="GO" id="GO:0015031">
    <property type="term" value="P:protein transport"/>
    <property type="evidence" value="ECO:0007669"/>
    <property type="project" value="UniProtKB-KW"/>
</dbReference>
<dbReference type="FunFam" id="2.130.10.10:FF:000193">
    <property type="entry name" value="Protein transport protein SEC31, putative"/>
    <property type="match status" value="1"/>
</dbReference>
<dbReference type="Gene3D" id="1.25.40.1030">
    <property type="match status" value="1"/>
</dbReference>
<dbReference type="Gene3D" id="1.20.940.10">
    <property type="entry name" value="Functional domain of the splicing factor Prp18"/>
    <property type="match status" value="1"/>
</dbReference>
<dbReference type="Gene3D" id="2.130.10.10">
    <property type="entry name" value="YVTN repeat-like/Quinoprotein amine dehydrogenase"/>
    <property type="match status" value="1"/>
</dbReference>
<dbReference type="InterPro" id="IPR024298">
    <property type="entry name" value="Sec16_Sec23-bd"/>
</dbReference>
<dbReference type="InterPro" id="IPR040251">
    <property type="entry name" value="SEC31-like"/>
</dbReference>
<dbReference type="InterPro" id="IPR009917">
    <property type="entry name" value="SRA1/Sec31"/>
</dbReference>
<dbReference type="InterPro" id="IPR015943">
    <property type="entry name" value="WD40/YVTN_repeat-like_dom_sf"/>
</dbReference>
<dbReference type="InterPro" id="IPR036322">
    <property type="entry name" value="WD40_repeat_dom_sf"/>
</dbReference>
<dbReference type="InterPro" id="IPR001680">
    <property type="entry name" value="WD40_rpt"/>
</dbReference>
<dbReference type="PANTHER" id="PTHR13923">
    <property type="entry name" value="SEC31-RELATED PROTEIN"/>
    <property type="match status" value="1"/>
</dbReference>
<dbReference type="PANTHER" id="PTHR13923:SF11">
    <property type="entry name" value="SECRETORY 31, ISOFORM D"/>
    <property type="match status" value="1"/>
</dbReference>
<dbReference type="Pfam" id="PF07304">
    <property type="entry name" value="SRA1"/>
    <property type="match status" value="1"/>
</dbReference>
<dbReference type="Pfam" id="PF12931">
    <property type="entry name" value="TPR_Sec16"/>
    <property type="match status" value="1"/>
</dbReference>
<dbReference type="Pfam" id="PF00400">
    <property type="entry name" value="WD40"/>
    <property type="match status" value="1"/>
</dbReference>
<dbReference type="SMART" id="SM00320">
    <property type="entry name" value="WD40"/>
    <property type="match status" value="6"/>
</dbReference>
<dbReference type="SUPFAM" id="SSF50978">
    <property type="entry name" value="WD40 repeat-like"/>
    <property type="match status" value="1"/>
</dbReference>
<dbReference type="PROSITE" id="PS00678">
    <property type="entry name" value="WD_REPEATS_1"/>
    <property type="match status" value="1"/>
</dbReference>
<dbReference type="PROSITE" id="PS50082">
    <property type="entry name" value="WD_REPEATS_2"/>
    <property type="match status" value="3"/>
</dbReference>
<dbReference type="PROSITE" id="PS50294">
    <property type="entry name" value="WD_REPEATS_REGION"/>
    <property type="match status" value="1"/>
</dbReference>
<keyword id="KW-0968">Cytoplasmic vesicle</keyword>
<keyword id="KW-0256">Endoplasmic reticulum</keyword>
<keyword id="KW-0931">ER-Golgi transport</keyword>
<keyword id="KW-0472">Membrane</keyword>
<keyword id="KW-0653">Protein transport</keyword>
<keyword id="KW-1185">Reference proteome</keyword>
<keyword id="KW-0677">Repeat</keyword>
<keyword id="KW-0813">Transport</keyword>
<keyword id="KW-0853">WD repeat</keyword>
<organism>
    <name type="scientific">Chaetomium globosum (strain ATCC 6205 / CBS 148.51 / DSM 1962 / NBRC 6347 / NRRL 1970)</name>
    <name type="common">Soil fungus</name>
    <dbReference type="NCBI Taxonomy" id="306901"/>
    <lineage>
        <taxon>Eukaryota</taxon>
        <taxon>Fungi</taxon>
        <taxon>Dikarya</taxon>
        <taxon>Ascomycota</taxon>
        <taxon>Pezizomycotina</taxon>
        <taxon>Sordariomycetes</taxon>
        <taxon>Sordariomycetidae</taxon>
        <taxon>Sordariales</taxon>
        <taxon>Chaetomiaceae</taxon>
        <taxon>Chaetomium</taxon>
    </lineage>
</organism>
<gene>
    <name type="primary">SEC31</name>
    <name type="ORF">CHGG_07916</name>
</gene>
<proteinExistence type="inferred from homology"/>
<evidence type="ECO:0000250" key="1"/>
<evidence type="ECO:0000255" key="2">
    <source>
        <dbReference type="PROSITE-ProRule" id="PRU00221"/>
    </source>
</evidence>
<evidence type="ECO:0000256" key="3">
    <source>
        <dbReference type="SAM" id="MobiDB-lite"/>
    </source>
</evidence>
<evidence type="ECO:0000305" key="4"/>
<comment type="function">
    <text evidence="1">Component of the coat protein complex II (COPII) which promotes the formation of transport vesicles from the endoplasmic reticulum (ER). The coat has two main functions, the physical deformation of the endoplasmic reticulum membrane into vesicles and the selection of cargo molecules (By similarity).</text>
</comment>
<comment type="subunit">
    <text evidence="1">The COPII coat is composed of at least 5 proteins: the SEC23/24 complex, the SEC13/31 complex, and the protein SAR1. SEC13 and SEC31 make a 2:2 tetramer that forms the edge element of the COPII outer coat. The tetramer self-assembles in multiple copies to form the complete polyhedral cage. Interacts (via WD 8) with SEC13 (By similarity).</text>
</comment>
<comment type="subcellular location">
    <subcellularLocation>
        <location evidence="1">Cytoplasmic vesicle</location>
        <location evidence="1">COPII-coated vesicle membrane</location>
        <topology evidence="1">Peripheral membrane protein</topology>
        <orientation evidence="1">Cytoplasmic side</orientation>
    </subcellularLocation>
    <subcellularLocation>
        <location evidence="1">Endoplasmic reticulum membrane</location>
        <topology evidence="1">Peripheral membrane protein</topology>
        <orientation evidence="1">Cytoplasmic side</orientation>
    </subcellularLocation>
</comment>
<comment type="similarity">
    <text evidence="4">Belongs to the WD repeat SEC31 family.</text>
</comment>